<feature type="chain" id="PRO_0000210181" description="X-ray repair cross-complementing protein 5">
    <location>
        <begin position="1"/>
        <end position="632"/>
    </location>
</feature>
<feature type="domain" description="Ku">
    <location>
        <begin position="283"/>
        <end position="490"/>
    </location>
</feature>
<feature type="domain" description="SAP" evidence="3">
    <location>
        <begin position="595"/>
        <end position="629"/>
    </location>
</feature>
<feature type="region of interest" description="Disordered" evidence="4">
    <location>
        <begin position="555"/>
        <end position="578"/>
    </location>
</feature>
<feature type="active site" description="Schiff-base intermediate with DNA; for 5'-deoxyribose-5-phosphate lyase activity" evidence="1">
    <location>
        <position position="52"/>
    </location>
</feature>
<name>XRCC6_CHICK</name>
<gene>
    <name type="primary">XRCC6</name>
    <name type="synonym">G22P1</name>
    <name type="synonym">KU70</name>
</gene>
<reference key="1">
    <citation type="journal article" date="1998" name="EMBO J.">
        <title>Homologous recombination and non-homologous end-joining pathways of DNA double-strand break repair have overlapping roles in the maintenance of chromosomal integrity in vertebrate cells.</title>
        <authorList>
            <person name="Takata M."/>
            <person name="Sasaki M.S."/>
            <person name="Sonoda E."/>
            <person name="Morrison C."/>
            <person name="Hashimoto M."/>
            <person name="Utsumi H."/>
            <person name="Yamaguchi-Iwai Y."/>
            <person name="Shinohara A."/>
            <person name="Takeda S."/>
        </authorList>
    </citation>
    <scope>NUCLEOTIDE SEQUENCE [MRNA]</scope>
    <source>
        <tissue>Intestinal mucosa</tissue>
    </source>
</reference>
<keyword id="KW-0010">Activator</keyword>
<keyword id="KW-0067">ATP-binding</keyword>
<keyword id="KW-0158">Chromosome</keyword>
<keyword id="KW-0227">DNA damage</keyword>
<keyword id="KW-0233">DNA recombination</keyword>
<keyword id="KW-0234">DNA repair</keyword>
<keyword id="KW-0238">DNA-binding</keyword>
<keyword id="KW-0347">Helicase</keyword>
<keyword id="KW-0378">Hydrolase</keyword>
<keyword id="KW-0456">Lyase</keyword>
<keyword id="KW-0511">Multifunctional enzyme</keyword>
<keyword id="KW-0547">Nucleotide-binding</keyword>
<keyword id="KW-0539">Nucleus</keyword>
<keyword id="KW-0597">Phosphoprotein</keyword>
<keyword id="KW-1185">Reference proteome</keyword>
<keyword id="KW-0804">Transcription</keyword>
<keyword id="KW-0805">Transcription regulation</keyword>
<sequence>MEMWVLGEVGMAVLSAAAMADWVSYYRGDGPDEEEDGEQQEEEGPEAVADYRFSGRDSLIFLVDASKAMFEPYENEEAATPFDMTMQCIRNVYTSKIISSDKDLLSVVFYGMENNKNSADFKHIYVLQELDNPGAKRILELDQYRGDEGRVLFRETFGHNADYSLGEALWACSNLFSDVRVRLSHKRIMLFTNEDNPHANDSAKAKLARTRAGDLRDTGIILDLMHLKKPGGFDISLFYRDIINVAEDEDLGIQPDESGKLEHLMKKVRAKETRKRALSRLNLYLNKDLSFSVGVYNLIQKAYKPYPVKLYRETNEPVKTKTRVFNGKTGSLLLPSDTKRAQTYGNRQIAMEKEETEEVKRFDSPGLFLIGFKPLSMLKQHHHIRPSQFMYPEESLVTGSTTLFNALLMKCLEKEVMALCRYIARRNTPPRIVALIPQEEEVDEQKVQIAPPGFHIIFLPYADDKRNVDFTEKVPANREQVDKMKGIIQKLRFKYRTDSFENPVLQQHFRNLEALALDMLEPEQAEDLTMPKTEEMSRRLGNLVEEFKQLVYPPDYSPEGKAAKRKQAGDAQAEKRPKIEISEDSLRSYVQNGTLGKLTVSALKDTCRHYGLRSGGKKQELIDALTEYFSGR</sequence>
<protein>
    <recommendedName>
        <fullName>X-ray repair cross-complementing protein 5</fullName>
        <ecNumber>3.6.4.-</ecNumber>
        <ecNumber>4.2.99.-</ecNumber>
    </recommendedName>
    <alternativeName>
        <fullName>5'-deoxyribose-5-phosphate lyase Ku70</fullName>
        <shortName>5'-dRP/AP lyase Ku70</shortName>
    </alternativeName>
    <alternativeName>
        <fullName>ATP-dependent DNA helicase 2 subunit 1</fullName>
    </alternativeName>
    <alternativeName>
        <fullName>ATP-dependent DNA helicase II 70 kDa subunit</fullName>
    </alternativeName>
    <alternativeName>
        <fullName>DNA repair protein XRCC6</fullName>
    </alternativeName>
    <alternativeName>
        <fullName>Ku autoantigen protein p70 homolog</fullName>
        <shortName>Ku70</shortName>
    </alternativeName>
</protein>
<organism>
    <name type="scientific">Gallus gallus</name>
    <name type="common">Chicken</name>
    <dbReference type="NCBI Taxonomy" id="9031"/>
    <lineage>
        <taxon>Eukaryota</taxon>
        <taxon>Metazoa</taxon>
        <taxon>Chordata</taxon>
        <taxon>Craniata</taxon>
        <taxon>Vertebrata</taxon>
        <taxon>Euteleostomi</taxon>
        <taxon>Archelosauria</taxon>
        <taxon>Archosauria</taxon>
        <taxon>Dinosauria</taxon>
        <taxon>Saurischia</taxon>
        <taxon>Theropoda</taxon>
        <taxon>Coelurosauria</taxon>
        <taxon>Aves</taxon>
        <taxon>Neognathae</taxon>
        <taxon>Galloanserae</taxon>
        <taxon>Galliformes</taxon>
        <taxon>Phasianidae</taxon>
        <taxon>Phasianinae</taxon>
        <taxon>Gallus</taxon>
    </lineage>
</organism>
<dbReference type="EC" id="3.6.4.-"/>
<dbReference type="EC" id="4.2.99.-"/>
<dbReference type="EMBL" id="AB016529">
    <property type="protein sequence ID" value="BAA32018.1"/>
    <property type="molecule type" value="mRNA"/>
</dbReference>
<dbReference type="RefSeq" id="NP_990258.2">
    <property type="nucleotide sequence ID" value="NM_204927.2"/>
</dbReference>
<dbReference type="SMR" id="O93257"/>
<dbReference type="BioGRID" id="676041">
    <property type="interactions" value="2"/>
</dbReference>
<dbReference type="FunCoup" id="O93257">
    <property type="interactions" value="2755"/>
</dbReference>
<dbReference type="STRING" id="9031.ENSGALP00000053314"/>
<dbReference type="PaxDb" id="9031-ENSGALP00000037185"/>
<dbReference type="GeneID" id="395767"/>
<dbReference type="KEGG" id="gga:395767"/>
<dbReference type="CTD" id="2547"/>
<dbReference type="VEuPathDB" id="HostDB:geneid_395767"/>
<dbReference type="eggNOG" id="KOG2327">
    <property type="taxonomic scope" value="Eukaryota"/>
</dbReference>
<dbReference type="InParanoid" id="O93257"/>
<dbReference type="OrthoDB" id="3249161at2759"/>
<dbReference type="PhylomeDB" id="O93257"/>
<dbReference type="Reactome" id="R-GGA-353423">
    <property type="pathway name" value="Non-homologous end joining (NHEJ)"/>
</dbReference>
<dbReference type="PRO" id="PR:O93257"/>
<dbReference type="Proteomes" id="UP000000539">
    <property type="component" value="Unassembled WGS sequence"/>
</dbReference>
<dbReference type="GO" id="GO:0005694">
    <property type="term" value="C:chromosome"/>
    <property type="evidence" value="ECO:0007669"/>
    <property type="project" value="UniProtKB-SubCell"/>
</dbReference>
<dbReference type="GO" id="GO:0043564">
    <property type="term" value="C:Ku70:Ku80 complex"/>
    <property type="evidence" value="ECO:0000250"/>
    <property type="project" value="UniProtKB"/>
</dbReference>
<dbReference type="GO" id="GO:0070419">
    <property type="term" value="C:nonhomologous end joining complex"/>
    <property type="evidence" value="ECO:0000250"/>
    <property type="project" value="UniProtKB"/>
</dbReference>
<dbReference type="GO" id="GO:0005654">
    <property type="term" value="C:nucleoplasm"/>
    <property type="evidence" value="ECO:0000304"/>
    <property type="project" value="Reactome"/>
</dbReference>
<dbReference type="GO" id="GO:1990904">
    <property type="term" value="C:ribonucleoprotein complex"/>
    <property type="evidence" value="ECO:0000250"/>
    <property type="project" value="UniProtKB"/>
</dbReference>
<dbReference type="GO" id="GO:0051575">
    <property type="term" value="F:5'-deoxyribose-5-phosphate lyase activity"/>
    <property type="evidence" value="ECO:0000250"/>
    <property type="project" value="UniProtKB"/>
</dbReference>
<dbReference type="GO" id="GO:0005524">
    <property type="term" value="F:ATP binding"/>
    <property type="evidence" value="ECO:0007669"/>
    <property type="project" value="UniProtKB-KW"/>
</dbReference>
<dbReference type="GO" id="GO:0003684">
    <property type="term" value="F:damaged DNA binding"/>
    <property type="evidence" value="ECO:0007669"/>
    <property type="project" value="InterPro"/>
</dbReference>
<dbReference type="GO" id="GO:0003678">
    <property type="term" value="F:DNA helicase activity"/>
    <property type="evidence" value="ECO:0007669"/>
    <property type="project" value="InterPro"/>
</dbReference>
<dbReference type="GO" id="GO:0016787">
    <property type="term" value="F:hydrolase activity"/>
    <property type="evidence" value="ECO:0007669"/>
    <property type="project" value="UniProtKB-KW"/>
</dbReference>
<dbReference type="GO" id="GO:0003723">
    <property type="term" value="F:RNA binding"/>
    <property type="evidence" value="ECO:0000250"/>
    <property type="project" value="UniProtKB"/>
</dbReference>
<dbReference type="GO" id="GO:0042162">
    <property type="term" value="F:telomeric DNA binding"/>
    <property type="evidence" value="ECO:0000318"/>
    <property type="project" value="GO_Central"/>
</dbReference>
<dbReference type="GO" id="GO:0071480">
    <property type="term" value="P:cellular response to gamma radiation"/>
    <property type="evidence" value="ECO:0000250"/>
    <property type="project" value="UniProtKB"/>
</dbReference>
<dbReference type="GO" id="GO:0006310">
    <property type="term" value="P:DNA recombination"/>
    <property type="evidence" value="ECO:0007669"/>
    <property type="project" value="UniProtKB-KW"/>
</dbReference>
<dbReference type="GO" id="GO:0006303">
    <property type="term" value="P:double-strand break repair via nonhomologous end joining"/>
    <property type="evidence" value="ECO:0000250"/>
    <property type="project" value="UniProtKB"/>
</dbReference>
<dbReference type="GO" id="GO:0045892">
    <property type="term" value="P:negative regulation of DNA-templated transcription"/>
    <property type="evidence" value="ECO:0000250"/>
    <property type="project" value="UniProtKB"/>
</dbReference>
<dbReference type="GO" id="GO:0000723">
    <property type="term" value="P:telomere maintenance"/>
    <property type="evidence" value="ECO:0000318"/>
    <property type="project" value="GO_Central"/>
</dbReference>
<dbReference type="CDD" id="cd00788">
    <property type="entry name" value="KU70"/>
    <property type="match status" value="1"/>
</dbReference>
<dbReference type="CDD" id="cd01458">
    <property type="entry name" value="vWA_ku"/>
    <property type="match status" value="1"/>
</dbReference>
<dbReference type="FunFam" id="1.10.720.30:FF:000007">
    <property type="entry name" value="X-ray repair cross complementing 6"/>
    <property type="match status" value="1"/>
</dbReference>
<dbReference type="FunFam" id="2.40.290.10:FF:000001">
    <property type="entry name" value="X-ray repair cross complementing 6"/>
    <property type="match status" value="1"/>
</dbReference>
<dbReference type="FunFam" id="3.40.50.410:FF:000031">
    <property type="entry name" value="X-ray repair cross-complementing protein 6 isoform X1"/>
    <property type="match status" value="1"/>
</dbReference>
<dbReference type="FunFam" id="4.10.970.10:FF:000001">
    <property type="entry name" value="X-ray repair cross-complementing protein 6 isoform X1"/>
    <property type="match status" value="1"/>
</dbReference>
<dbReference type="FunFam" id="1.10.1600.10:FF:000001">
    <property type="entry name" value="X-ray repair cross-complementing protein 6 isoform X2"/>
    <property type="match status" value="1"/>
</dbReference>
<dbReference type="Gene3D" id="1.10.1600.10">
    <property type="match status" value="1"/>
</dbReference>
<dbReference type="Gene3D" id="2.40.290.10">
    <property type="match status" value="1"/>
</dbReference>
<dbReference type="Gene3D" id="4.10.970.10">
    <property type="entry name" value="Ku70, bridge and pillars"/>
    <property type="match status" value="1"/>
</dbReference>
<dbReference type="Gene3D" id="1.10.720.30">
    <property type="entry name" value="SAP domain"/>
    <property type="match status" value="1"/>
</dbReference>
<dbReference type="Gene3D" id="3.40.50.410">
    <property type="entry name" value="von Willebrand factor, type A domain"/>
    <property type="match status" value="1"/>
</dbReference>
<dbReference type="InterPro" id="IPR006165">
    <property type="entry name" value="Ku70"/>
</dbReference>
<dbReference type="InterPro" id="IPR006164">
    <property type="entry name" value="Ku70/Ku80_beta-barrel_dom"/>
</dbReference>
<dbReference type="InterPro" id="IPR027388">
    <property type="entry name" value="Ku70_bridge/pillars_dom_sf"/>
</dbReference>
<dbReference type="InterPro" id="IPR047087">
    <property type="entry name" value="KU70_core_dom"/>
</dbReference>
<dbReference type="InterPro" id="IPR005160">
    <property type="entry name" value="Ku_C"/>
</dbReference>
<dbReference type="InterPro" id="IPR005161">
    <property type="entry name" value="Ku_N"/>
</dbReference>
<dbReference type="InterPro" id="IPR003034">
    <property type="entry name" value="SAP_dom"/>
</dbReference>
<dbReference type="InterPro" id="IPR036361">
    <property type="entry name" value="SAP_dom_sf"/>
</dbReference>
<dbReference type="InterPro" id="IPR016194">
    <property type="entry name" value="SPOC-like_C_dom_sf"/>
</dbReference>
<dbReference type="InterPro" id="IPR036465">
    <property type="entry name" value="vWFA_dom_sf"/>
</dbReference>
<dbReference type="NCBIfam" id="TIGR00578">
    <property type="entry name" value="ku70"/>
    <property type="match status" value="1"/>
</dbReference>
<dbReference type="PANTHER" id="PTHR12604">
    <property type="entry name" value="KU AUTOANTIGEN DNA HELICASE"/>
    <property type="match status" value="1"/>
</dbReference>
<dbReference type="PANTHER" id="PTHR12604:SF2">
    <property type="entry name" value="X-RAY REPAIR CROSS-COMPLEMENTING PROTEIN 6"/>
    <property type="match status" value="1"/>
</dbReference>
<dbReference type="Pfam" id="PF02735">
    <property type="entry name" value="Ku"/>
    <property type="match status" value="1"/>
</dbReference>
<dbReference type="Pfam" id="PF03730">
    <property type="entry name" value="Ku_C"/>
    <property type="match status" value="1"/>
</dbReference>
<dbReference type="Pfam" id="PF03731">
    <property type="entry name" value="Ku_N"/>
    <property type="match status" value="1"/>
</dbReference>
<dbReference type="Pfam" id="PF02037">
    <property type="entry name" value="SAP"/>
    <property type="match status" value="1"/>
</dbReference>
<dbReference type="PIRSF" id="PIRSF003033">
    <property type="entry name" value="Ku70"/>
    <property type="match status" value="1"/>
</dbReference>
<dbReference type="SMART" id="SM00559">
    <property type="entry name" value="Ku78"/>
    <property type="match status" value="1"/>
</dbReference>
<dbReference type="SMART" id="SM00513">
    <property type="entry name" value="SAP"/>
    <property type="match status" value="1"/>
</dbReference>
<dbReference type="SUPFAM" id="SSF68906">
    <property type="entry name" value="SAP domain"/>
    <property type="match status" value="1"/>
</dbReference>
<dbReference type="SUPFAM" id="SSF100939">
    <property type="entry name" value="SPOC domain-like"/>
    <property type="match status" value="1"/>
</dbReference>
<dbReference type="SUPFAM" id="SSF53300">
    <property type="entry name" value="vWA-like"/>
    <property type="match status" value="1"/>
</dbReference>
<dbReference type="PROSITE" id="PS50800">
    <property type="entry name" value="SAP"/>
    <property type="match status" value="1"/>
</dbReference>
<evidence type="ECO:0000250" key="1"/>
<evidence type="ECO:0000250" key="2">
    <source>
        <dbReference type="UniProtKB" id="P12956"/>
    </source>
</evidence>
<evidence type="ECO:0000255" key="3">
    <source>
        <dbReference type="PROSITE-ProRule" id="PRU00186"/>
    </source>
</evidence>
<evidence type="ECO:0000256" key="4">
    <source>
        <dbReference type="SAM" id="MobiDB-lite"/>
    </source>
</evidence>
<evidence type="ECO:0000305" key="5"/>
<proteinExistence type="evidence at transcript level"/>
<accession>O93257</accession>
<comment type="function">
    <text evidence="2">Single-stranded DNA-dependent ATP-dependent helicase that plays a key role in DNA non-homologous end joining (NHEJ) by recruiting DNA-PK to DNA. Required for double-strand break repair and V(D)J recombination. Also has a role in chromosome translocation. Has a role in chromosome translocation. The DNA helicase II complex binds preferentially to fork-like ends of double-stranded DNA in a cell cycle-dependent manner. It works in the 3'-5' direction. During NHEJ, the XRCC5-XRRC6 dimer performs the recognition step: it recognizes and binds to the broken ends of the DNA and protects them from further resection. Binding to DNA may be mediated by XRCC6. The XRCC5-XRRC6 dimer acts as a regulatory subunit of the DNA-dependent protein kinase complex DNA-PK by increasing the affinity of the catalytic subunit PRKDC to DNA by 100-fold. The XRCC5-XRRC6 dimer is probably involved in stabilizing broken DNA ends and bringing them together. The assembly of the DNA-PK complex to DNA ends is required for the NHEJ ligation step. Probably also acts as a 5'-deoxyribose-5-phosphate lyase (5'-dRP lyase), by catalyzing the beta-elimination of the 5' deoxyribose-5-phosphate at an abasic site near double-strand breaks. 5'-dRP lyase activity allows to 'clean' the termini of abasic sites, a class of nucleotide damage commonly associated with strand breaks, before such broken ends can be joined. The XRCC5-XRRC6 dimer together with APEX1 acts as a negative regulator of transcription (By similarity).</text>
</comment>
<comment type="subunit">
    <text evidence="2">Heterodimer composed of XRCC5/Ku80 and XRCC6/Ku70. Component of the core long-range non-homologous end joining (NHEJ) complex (also named DNA-PK complex) composed of PRKDC, LIG4, XRCC4, XRCC6/Ku70, XRCC5/Ku86 and NHEJ1/XLF. Additional component of the NHEJ complex includes PAXX. Following autophosphorylation, PRKDC dissociates from DNA, leading to formation of the short-range NHEJ complex, composed of LIG4, XRCC4, XRCC6/Ku70, XRCC5/Ku86 and NHEJ1/XLF.</text>
</comment>
<comment type="subcellular location">
    <subcellularLocation>
        <location evidence="2">Nucleus</location>
    </subcellularLocation>
    <subcellularLocation>
        <location evidence="2">Chromosome</location>
    </subcellularLocation>
</comment>
<comment type="PTM">
    <text evidence="2">Phosphorylated on serine residues.</text>
</comment>
<comment type="similarity">
    <text evidence="5">Belongs to the ku70 family.</text>
</comment>